<gene>
    <name evidence="1" type="primary">groES</name>
    <name evidence="1" type="synonym">groS</name>
    <name type="ordered locus">SP_1907</name>
</gene>
<comment type="function">
    <text evidence="1">Together with the chaperonin GroEL, plays an essential role in assisting protein folding. The GroEL-GroES system forms a nano-cage that allows encapsulation of the non-native substrate proteins and provides a physical environment optimized to promote and accelerate protein folding. GroES binds to the apical surface of the GroEL ring, thereby capping the opening of the GroEL channel.</text>
</comment>
<comment type="subunit">
    <text evidence="1">Heptamer of 7 subunits arranged in a ring. Interacts with the chaperonin GroEL.</text>
</comment>
<comment type="interaction">
    <interactant intactId="EBI-2206949">
        <id>Q97NV3</id>
    </interactant>
    <interactant intactId="EBI-2207344">
        <id>P0A2W6</id>
        <label>acpS</label>
    </interactant>
    <organismsDiffer>false</organismsDiffer>
    <experiments>2</experiments>
</comment>
<comment type="interaction">
    <interactant intactId="EBI-2206949">
        <id>Q97NV3</id>
    </interactant>
    <interactant intactId="EBI-2206969">
        <id>Q97SU1</id>
        <label>adk</label>
    </interactant>
    <organismsDiffer>false</organismsDiffer>
    <experiments>2</experiments>
</comment>
<comment type="interaction">
    <interactant intactId="EBI-2206949">
        <id>Q97NV3</id>
    </interactant>
    <interactant intactId="EBI-2207316">
        <id>P63544</id>
        <label>apt</label>
    </interactant>
    <organismsDiffer>false</organismsDiffer>
    <experiments>2</experiments>
</comment>
<comment type="interaction">
    <interactant intactId="EBI-2206949">
        <id>Q97NV3</id>
    </interactant>
    <interactant intactId="EBI-2207421">
        <id>Q54869</id>
        <label>argS</label>
    </interactant>
    <organismsDiffer>false</organismsDiffer>
    <experiments>2</experiments>
</comment>
<comment type="interaction">
    <interactant intactId="EBI-2206949">
        <id>Q97NV3</id>
    </interactant>
    <interactant intactId="EBI-2207276">
        <id>Q9S400</id>
        <label>aroA</label>
    </interactant>
    <organismsDiffer>false</organismsDiffer>
    <experiments>2</experiments>
</comment>
<comment type="interaction">
    <interactant intactId="EBI-2206949">
        <id>Q97NV3</id>
    </interactant>
    <interactant intactId="EBI-2207290">
        <id>P63588</id>
        <label>aroD</label>
    </interactant>
    <organismsDiffer>false</organismsDiffer>
    <experiments>2</experiments>
</comment>
<comment type="interaction">
    <interactant intactId="EBI-2206949">
        <id>Q97NV3</id>
    </interactant>
    <interactant intactId="EBI-2207302">
        <id>Q97PR0</id>
        <label>asnS</label>
    </interactant>
    <organismsDiffer>false</organismsDiffer>
    <experiments>2</experiments>
</comment>
<comment type="interaction">
    <interactant intactId="EBI-2206949">
        <id>Q97NV3</id>
    </interactant>
    <interactant intactId="EBI-2207165">
        <id>Q97R25</id>
        <label>dapA</label>
    </interactant>
    <organismsDiffer>false</organismsDiffer>
    <experiments>2</experiments>
</comment>
<comment type="interaction">
    <interactant intactId="EBI-2206949">
        <id>Q97NV3</id>
    </interactant>
    <interactant intactId="EBI-2207079">
        <id>P95830</id>
        <label>dnaJ</label>
    </interactant>
    <organismsDiffer>false</organismsDiffer>
    <experiments>2</experiments>
</comment>
<comment type="interaction">
    <interactant intactId="EBI-2206949">
        <id>Q97NV3</id>
    </interactant>
    <interactant intactId="EBI-2207206">
        <id>Q97QS2</id>
        <label>eno</label>
    </interactant>
    <organismsDiffer>false</organismsDiffer>
    <experiments>2</experiments>
</comment>
<comment type="interaction">
    <interactant intactId="EBI-2206949">
        <id>Q97NV3</id>
    </interactant>
    <interactant intactId="EBI-2207039">
        <id>Q97SE6</id>
        <label>gatA</label>
    </interactant>
    <organismsDiffer>false</organismsDiffer>
    <experiments>2</experiments>
</comment>
<comment type="interaction">
    <interactant intactId="EBI-2206949">
        <id>Q97NV3</id>
    </interactant>
    <interactant intactId="EBI-2207023">
        <id>Q97SE7</id>
        <label>gatB</label>
    </interactant>
    <organismsDiffer>false</organismsDiffer>
    <experiments>2</experiments>
</comment>
<comment type="interaction">
    <interactant intactId="EBI-2206949">
        <id>Q97NV3</id>
    </interactant>
    <interactant intactId="EBI-2207053">
        <id>Q97SE5</id>
        <label>gatC</label>
    </interactant>
    <organismsDiffer>false</organismsDiffer>
    <experiments>2</experiments>
</comment>
<comment type="interaction">
    <interactant intactId="EBI-2206949">
        <id>Q97NV3</id>
    </interactant>
    <interactant intactId="EBI-2207395">
        <id>P0A335</id>
        <label>groEL</label>
    </interactant>
    <organismsDiffer>false</organismsDiffer>
    <experiments>2</experiments>
</comment>
<comment type="interaction">
    <interactant intactId="EBI-2206949">
        <id>Q97NV3</id>
    </interactant>
    <interactant intactId="EBI-2206949">
        <id>Q97NV3</id>
        <label>groES</label>
    </interactant>
    <organismsDiffer>false</organismsDiffer>
    <experiments>2</experiments>
</comment>
<comment type="interaction">
    <interactant intactId="EBI-2206949">
        <id>Q97NV3</id>
    </interactant>
    <interactant intactId="EBI-2207065">
        <id>Q97S73</id>
        <label>grpE</label>
    </interactant>
    <organismsDiffer>false</organismsDiffer>
    <experiments>2</experiments>
</comment>
<comment type="interaction">
    <interactant intactId="EBI-2206949">
        <id>Q97NV3</id>
    </interactant>
    <interactant intactId="EBI-2207149">
        <id>P65144</id>
        <label>infC</label>
    </interactant>
    <organismsDiffer>false</organismsDiffer>
    <experiments>2</experiments>
</comment>
<comment type="interaction">
    <interactant intactId="EBI-2206949">
        <id>Q97NV3</id>
    </interactant>
    <interactant intactId="EBI-2207447">
        <id>A0A0H2UNP1</id>
        <label>lacF-1</label>
    </interactant>
    <organismsDiffer>false</organismsDiffer>
    <experiments>2</experiments>
</comment>
<comment type="interaction">
    <interactant intactId="EBI-2206949">
        <id>Q97NV3</id>
    </interactant>
    <interactant intactId="EBI-2207121">
        <id>Q97RS9</id>
        <label>lysS</label>
    </interactant>
    <organismsDiffer>false</organismsDiffer>
    <experiments>2</experiments>
</comment>
<comment type="interaction">
    <interactant intactId="EBI-2206949">
        <id>Q97NV3</id>
    </interactant>
    <interactant intactId="EBI-2207435">
        <id>P0A4T1</id>
        <label>malR</label>
    </interactant>
    <organismsDiffer>false</organismsDiffer>
    <experiments>2</experiments>
</comment>
<comment type="interaction">
    <interactant intactId="EBI-2206949">
        <id>Q97NV3</id>
    </interactant>
    <interactant intactId="EBI-2207260">
        <id>Q97Q68</id>
        <label>mecA</label>
    </interactant>
    <organismsDiffer>false</organismsDiffer>
    <experiments>2</experiments>
</comment>
<comment type="interaction">
    <interactant intactId="EBI-2206949">
        <id>Q97NV3</id>
    </interactant>
    <interactant intactId="EBI-2207232">
        <id>P41354</id>
        <label>mutX</label>
    </interactant>
    <organismsDiffer>false</organismsDiffer>
    <experiments>2</experiments>
</comment>
<comment type="interaction">
    <interactant intactId="EBI-2206949">
        <id>Q97NV3</id>
    </interactant>
    <interactant intactId="EBI-2206955">
        <id>P65887</id>
        <label>purA</label>
    </interactant>
    <organismsDiffer>false</organismsDiffer>
    <experiments>2</experiments>
</comment>
<comment type="interaction">
    <interactant intactId="EBI-2206949">
        <id>Q97NV3</id>
    </interactant>
    <interactant intactId="EBI-2207109">
        <id>P0CB75</id>
        <label>pyrF</label>
    </interactant>
    <organismsDiffer>false</organismsDiffer>
    <experiments>2</experiments>
</comment>
<comment type="interaction">
    <interactant intactId="EBI-2206949">
        <id>Q97NV3</id>
    </interactant>
    <interactant intactId="EBI-2207248">
        <id>P65946</id>
        <label>pyrR</label>
    </interactant>
    <organismsDiffer>false</organismsDiffer>
    <experiments>2</experiments>
</comment>
<comment type="interaction">
    <interactant intactId="EBI-2206949">
        <id>Q97NV3</id>
    </interactant>
    <interactant intactId="EBI-2207177">
        <id>Q97QV8</id>
        <label>rex</label>
    </interactant>
    <organismsDiffer>false</organismsDiffer>
    <experiments>2</experiments>
</comment>
<comment type="interaction">
    <interactant intactId="EBI-2206949">
        <id>Q97NV3</id>
    </interactant>
    <interactant intactId="EBI-2207368">
        <id>Q97NX5</id>
        <label>scpA</label>
    </interactant>
    <organismsDiffer>false</organismsDiffer>
    <experiments>2</experiments>
</comment>
<comment type="interaction">
    <interactant intactId="EBI-2206949">
        <id>Q97NV3</id>
    </interactant>
    <interactant intactId="EBI-2206697">
        <id>Q97NX6</id>
        <label>scpB</label>
    </interactant>
    <organismsDiffer>false</organismsDiffer>
    <experiments>2</experiments>
</comment>
<comment type="interaction">
    <interactant intactId="EBI-2206949">
        <id>Q97NV3</id>
    </interactant>
    <interactant intactId="EBI-2207137">
        <id>P0A4J6</id>
        <label>sodA</label>
    </interactant>
    <organismsDiffer>false</organismsDiffer>
    <experiments>2</experiments>
</comment>
<comment type="interaction">
    <interactant intactId="EBI-2206949">
        <id>Q97NV3</id>
    </interactant>
    <interactant intactId="EBI-2207193">
        <id>A0A0H2UPY3</id>
        <label>SP_1103</label>
    </interactant>
    <organismsDiffer>false</organismsDiffer>
    <experiments>2</experiments>
</comment>
<comment type="interaction">
    <interactant intactId="EBI-2206949">
        <id>Q97NV3</id>
    </interactant>
    <interactant intactId="EBI-2207382">
        <id>P0A4S9</id>
        <label>SP_1877</label>
    </interactant>
    <organismsDiffer>false</organismsDiffer>
    <experiments>2</experiments>
</comment>
<comment type="interaction">
    <interactant intactId="EBI-2206949">
        <id>Q97NV3</id>
    </interactant>
    <interactant intactId="EBI-2206997">
        <id>P05382</id>
        <label>sulA</label>
    </interactant>
    <organismsDiffer>false</organismsDiffer>
    <experiments>2</experiments>
</comment>
<comment type="interaction">
    <interactant intactId="EBI-2206949">
        <id>Q97NV3</id>
    </interactant>
    <interactant intactId="EBI-2207011">
        <id>P22291</id>
        <label>sulD</label>
    </interactant>
    <organismsDiffer>false</organismsDiffer>
    <experiments>2</experiments>
</comment>
<comment type="interaction">
    <interactant intactId="EBI-2206949">
        <id>Q97NV3</id>
    </interactant>
    <interactant intactId="EBI-2207332">
        <id>Q97PI4</id>
        <label>thrS</label>
    </interactant>
    <organismsDiffer>false</organismsDiffer>
    <experiments>2</experiments>
</comment>
<comment type="interaction">
    <interactant intactId="EBI-2206949">
        <id>Q97NV3</id>
    </interactant>
    <interactant intactId="EBI-2207093">
        <id>P67049</id>
        <label>thyA</label>
    </interactant>
    <organismsDiffer>false</organismsDiffer>
    <experiments>2</experiments>
</comment>
<comment type="interaction">
    <interactant intactId="EBI-2206949">
        <id>Q97NV3</id>
    </interactant>
    <interactant intactId="EBI-2206983">
        <id>Q97SR4</id>
        <label>uppS</label>
    </interactant>
    <organismsDiffer>false</organismsDiffer>
    <experiments>2</experiments>
</comment>
<comment type="interaction">
    <interactant intactId="EBI-2206949">
        <id>Q97NV3</id>
    </interactant>
    <interactant intactId="EBI-2207218">
        <id>Q97QP2</id>
        <label>xerS</label>
    </interactant>
    <organismsDiffer>false</organismsDiffer>
    <experiments>2</experiments>
</comment>
<comment type="subcellular location">
    <subcellularLocation>
        <location evidence="1">Cytoplasm</location>
    </subcellularLocation>
</comment>
<comment type="similarity">
    <text evidence="1">Belongs to the GroES chaperonin family.</text>
</comment>
<name>CH10_STRPN</name>
<protein>
    <recommendedName>
        <fullName evidence="1">Co-chaperonin GroES</fullName>
    </recommendedName>
    <alternativeName>
        <fullName evidence="1">10 kDa chaperonin</fullName>
    </alternativeName>
    <alternativeName>
        <fullName evidence="1">Chaperonin-10</fullName>
        <shortName evidence="1">Cpn10</shortName>
    </alternativeName>
</protein>
<reference key="1">
    <citation type="journal article" date="2001" name="Science">
        <title>Complete genome sequence of a virulent isolate of Streptococcus pneumoniae.</title>
        <authorList>
            <person name="Tettelin H."/>
            <person name="Nelson K.E."/>
            <person name="Paulsen I.T."/>
            <person name="Eisen J.A."/>
            <person name="Read T.D."/>
            <person name="Peterson S.N."/>
            <person name="Heidelberg J.F."/>
            <person name="DeBoy R.T."/>
            <person name="Haft D.H."/>
            <person name="Dodson R.J."/>
            <person name="Durkin A.S."/>
            <person name="Gwinn M.L."/>
            <person name="Kolonay J.F."/>
            <person name="Nelson W.C."/>
            <person name="Peterson J.D."/>
            <person name="Umayam L.A."/>
            <person name="White O."/>
            <person name="Salzberg S.L."/>
            <person name="Lewis M.R."/>
            <person name="Radune D."/>
            <person name="Holtzapple E.K."/>
            <person name="Khouri H.M."/>
            <person name="Wolf A.M."/>
            <person name="Utterback T.R."/>
            <person name="Hansen C.L."/>
            <person name="McDonald L.A."/>
            <person name="Feldblyum T.V."/>
            <person name="Angiuoli S.V."/>
            <person name="Dickinson T."/>
            <person name="Hickey E.K."/>
            <person name="Holt I.E."/>
            <person name="Loftus B.J."/>
            <person name="Yang F."/>
            <person name="Smith H.O."/>
            <person name="Venter J.C."/>
            <person name="Dougherty B.A."/>
            <person name="Morrison D.A."/>
            <person name="Hollingshead S.K."/>
            <person name="Fraser C.M."/>
        </authorList>
    </citation>
    <scope>NUCLEOTIDE SEQUENCE [LARGE SCALE GENOMIC DNA]</scope>
    <source>
        <strain>ATCC BAA-334 / TIGR4</strain>
    </source>
</reference>
<evidence type="ECO:0000255" key="1">
    <source>
        <dbReference type="HAMAP-Rule" id="MF_00580"/>
    </source>
</evidence>
<dbReference type="EMBL" id="AE005672">
    <property type="protein sequence ID" value="AAK75977.1"/>
    <property type="molecule type" value="Genomic_DNA"/>
</dbReference>
<dbReference type="PIR" id="H95222">
    <property type="entry name" value="H95222"/>
</dbReference>
<dbReference type="RefSeq" id="WP_000917330.1">
    <property type="nucleotide sequence ID" value="NZ_CP155539.1"/>
</dbReference>
<dbReference type="SMR" id="Q97NV3"/>
<dbReference type="IntAct" id="Q97NV3">
    <property type="interactions" value="36"/>
</dbReference>
<dbReference type="PaxDb" id="170187-SP_1907"/>
<dbReference type="EnsemblBacteria" id="AAK75977">
    <property type="protein sequence ID" value="AAK75977"/>
    <property type="gene ID" value="SP_1907"/>
</dbReference>
<dbReference type="GeneID" id="45652868"/>
<dbReference type="KEGG" id="spn:SP_1907"/>
<dbReference type="eggNOG" id="COG0234">
    <property type="taxonomic scope" value="Bacteria"/>
</dbReference>
<dbReference type="PhylomeDB" id="Q97NV3"/>
<dbReference type="BioCyc" id="SPNE170187:G1FZB-1960-MONOMER"/>
<dbReference type="Proteomes" id="UP000000585">
    <property type="component" value="Chromosome"/>
</dbReference>
<dbReference type="GO" id="GO:0005737">
    <property type="term" value="C:cytoplasm"/>
    <property type="evidence" value="ECO:0007669"/>
    <property type="project" value="UniProtKB-SubCell"/>
</dbReference>
<dbReference type="GO" id="GO:0005524">
    <property type="term" value="F:ATP binding"/>
    <property type="evidence" value="ECO:0007669"/>
    <property type="project" value="InterPro"/>
</dbReference>
<dbReference type="GO" id="GO:0042802">
    <property type="term" value="F:identical protein binding"/>
    <property type="evidence" value="ECO:0000353"/>
    <property type="project" value="IntAct"/>
</dbReference>
<dbReference type="GO" id="GO:0046872">
    <property type="term" value="F:metal ion binding"/>
    <property type="evidence" value="ECO:0007669"/>
    <property type="project" value="TreeGrafter"/>
</dbReference>
<dbReference type="GO" id="GO:0044183">
    <property type="term" value="F:protein folding chaperone"/>
    <property type="evidence" value="ECO:0007669"/>
    <property type="project" value="InterPro"/>
</dbReference>
<dbReference type="GO" id="GO:0051087">
    <property type="term" value="F:protein-folding chaperone binding"/>
    <property type="evidence" value="ECO:0007669"/>
    <property type="project" value="TreeGrafter"/>
</dbReference>
<dbReference type="GO" id="GO:0051082">
    <property type="term" value="F:unfolded protein binding"/>
    <property type="evidence" value="ECO:0007669"/>
    <property type="project" value="TreeGrafter"/>
</dbReference>
<dbReference type="GO" id="GO:0051085">
    <property type="term" value="P:chaperone cofactor-dependent protein refolding"/>
    <property type="evidence" value="ECO:0007669"/>
    <property type="project" value="TreeGrafter"/>
</dbReference>
<dbReference type="CDD" id="cd00320">
    <property type="entry name" value="cpn10"/>
    <property type="match status" value="1"/>
</dbReference>
<dbReference type="FunFam" id="2.30.33.40:FF:000007">
    <property type="entry name" value="10 kDa chaperonin"/>
    <property type="match status" value="1"/>
</dbReference>
<dbReference type="Gene3D" id="2.30.33.40">
    <property type="entry name" value="GroES chaperonin"/>
    <property type="match status" value="1"/>
</dbReference>
<dbReference type="HAMAP" id="MF_00580">
    <property type="entry name" value="CH10"/>
    <property type="match status" value="1"/>
</dbReference>
<dbReference type="InterPro" id="IPR020818">
    <property type="entry name" value="Chaperonin_GroES"/>
</dbReference>
<dbReference type="InterPro" id="IPR037124">
    <property type="entry name" value="Chaperonin_GroES_sf"/>
</dbReference>
<dbReference type="InterPro" id="IPR018369">
    <property type="entry name" value="Chaprnonin_Cpn10_CS"/>
</dbReference>
<dbReference type="InterPro" id="IPR011032">
    <property type="entry name" value="GroES-like_sf"/>
</dbReference>
<dbReference type="NCBIfam" id="NF001528">
    <property type="entry name" value="PRK00364.1-4"/>
    <property type="match status" value="1"/>
</dbReference>
<dbReference type="PANTHER" id="PTHR10772">
    <property type="entry name" value="10 KDA HEAT SHOCK PROTEIN"/>
    <property type="match status" value="1"/>
</dbReference>
<dbReference type="PANTHER" id="PTHR10772:SF58">
    <property type="entry name" value="CO-CHAPERONIN GROES"/>
    <property type="match status" value="1"/>
</dbReference>
<dbReference type="Pfam" id="PF00166">
    <property type="entry name" value="Cpn10"/>
    <property type="match status" value="1"/>
</dbReference>
<dbReference type="PRINTS" id="PR00297">
    <property type="entry name" value="CHAPERONIN10"/>
</dbReference>
<dbReference type="SMART" id="SM00883">
    <property type="entry name" value="Cpn10"/>
    <property type="match status" value="1"/>
</dbReference>
<dbReference type="SUPFAM" id="SSF50129">
    <property type="entry name" value="GroES-like"/>
    <property type="match status" value="1"/>
</dbReference>
<dbReference type="PROSITE" id="PS00681">
    <property type="entry name" value="CHAPERONINS_CPN10"/>
    <property type="match status" value="1"/>
</dbReference>
<keyword id="KW-0143">Chaperone</keyword>
<keyword id="KW-0963">Cytoplasm</keyword>
<keyword id="KW-1185">Reference proteome</keyword>
<feature type="chain" id="PRO_0000174866" description="Co-chaperonin GroES">
    <location>
        <begin position="1"/>
        <end position="94"/>
    </location>
</feature>
<organism>
    <name type="scientific">Streptococcus pneumoniae serotype 4 (strain ATCC BAA-334 / TIGR4)</name>
    <dbReference type="NCBI Taxonomy" id="170187"/>
    <lineage>
        <taxon>Bacteria</taxon>
        <taxon>Bacillati</taxon>
        <taxon>Bacillota</taxon>
        <taxon>Bacilli</taxon>
        <taxon>Lactobacillales</taxon>
        <taxon>Streptococcaceae</taxon>
        <taxon>Streptococcus</taxon>
    </lineage>
</organism>
<accession>Q97NV3</accession>
<proteinExistence type="evidence at protein level"/>
<sequence>MLKPLGDRVVLKIEEKEQTVGGFVLAGSAQEKTKTAQVVATGQGVRTLNGDLVAPSVKTGDRVLVEAHAGLDVKDGDEKYIIVGEANILAIIEE</sequence>